<organism>
    <name type="scientific">Aspergillus fumigatus (strain ATCC MYA-4609 / CBS 101355 / FGSC A1100 / Af293)</name>
    <name type="common">Neosartorya fumigata</name>
    <dbReference type="NCBI Taxonomy" id="330879"/>
    <lineage>
        <taxon>Eukaryota</taxon>
        <taxon>Fungi</taxon>
        <taxon>Dikarya</taxon>
        <taxon>Ascomycota</taxon>
        <taxon>Pezizomycotina</taxon>
        <taxon>Eurotiomycetes</taxon>
        <taxon>Eurotiomycetidae</taxon>
        <taxon>Eurotiales</taxon>
        <taxon>Aspergillaceae</taxon>
        <taxon>Aspergillus</taxon>
        <taxon>Aspergillus subgen. Fumigati</taxon>
    </lineage>
</organism>
<evidence type="ECO:0000255" key="1">
    <source>
        <dbReference type="PROSITE-ProRule" id="PRU00159"/>
    </source>
</evidence>
<evidence type="ECO:0000255" key="2">
    <source>
        <dbReference type="RuleBase" id="RU361165"/>
    </source>
</evidence>
<evidence type="ECO:0000256" key="3">
    <source>
        <dbReference type="SAM" id="MobiDB-lite"/>
    </source>
</evidence>
<evidence type="ECO:0000269" key="4">
    <source>
    </source>
</evidence>
<evidence type="ECO:0000269" key="5">
    <source>
    </source>
</evidence>
<evidence type="ECO:0000269" key="6">
    <source>
    </source>
</evidence>
<evidence type="ECO:0000269" key="7">
    <source>
    </source>
</evidence>
<evidence type="ECO:0000269" key="8">
    <source>
    </source>
</evidence>
<evidence type="ECO:0000269" key="9">
    <source>
    </source>
</evidence>
<evidence type="ECO:0000269" key="10">
    <source>
    </source>
</evidence>
<evidence type="ECO:0000303" key="11">
    <source>
    </source>
</evidence>
<dbReference type="EC" id="2.7.11.24" evidence="10"/>
<dbReference type="EMBL" id="AAHF01000005">
    <property type="protein sequence ID" value="EAL89421.1"/>
    <property type="molecule type" value="Genomic_DNA"/>
</dbReference>
<dbReference type="RefSeq" id="XP_751459.1">
    <property type="nucleotide sequence ID" value="XM_746366.1"/>
</dbReference>
<dbReference type="SMR" id="Q4WQR3"/>
<dbReference type="FunCoup" id="Q4WQR3">
    <property type="interactions" value="332"/>
</dbReference>
<dbReference type="STRING" id="330879.Q4WQR3"/>
<dbReference type="EnsemblFungi" id="EAL89421">
    <property type="protein sequence ID" value="EAL89421"/>
    <property type="gene ID" value="AFUA_4G13720"/>
</dbReference>
<dbReference type="GeneID" id="3509230"/>
<dbReference type="KEGG" id="afm:AFUA_4G13720"/>
<dbReference type="VEuPathDB" id="FungiDB:Afu4g13720"/>
<dbReference type="eggNOG" id="KOG0660">
    <property type="taxonomic scope" value="Eukaryota"/>
</dbReference>
<dbReference type="HOGENOM" id="CLU_000288_181_1_1"/>
<dbReference type="InParanoid" id="Q4WQR3"/>
<dbReference type="OMA" id="MDIPRPE"/>
<dbReference type="OrthoDB" id="192887at2759"/>
<dbReference type="Proteomes" id="UP000002530">
    <property type="component" value="Chromosome 4"/>
</dbReference>
<dbReference type="GO" id="GO:0005737">
    <property type="term" value="C:cytoplasm"/>
    <property type="evidence" value="ECO:0000318"/>
    <property type="project" value="GO_Central"/>
</dbReference>
<dbReference type="GO" id="GO:0005634">
    <property type="term" value="C:nucleus"/>
    <property type="evidence" value="ECO:0000318"/>
    <property type="project" value="GO_Central"/>
</dbReference>
<dbReference type="GO" id="GO:0005524">
    <property type="term" value="F:ATP binding"/>
    <property type="evidence" value="ECO:0007669"/>
    <property type="project" value="UniProtKB-KW"/>
</dbReference>
<dbReference type="GO" id="GO:0004707">
    <property type="term" value="F:MAP kinase activity"/>
    <property type="evidence" value="ECO:0000318"/>
    <property type="project" value="GO_Central"/>
</dbReference>
<dbReference type="GO" id="GO:0106310">
    <property type="term" value="F:protein serine kinase activity"/>
    <property type="evidence" value="ECO:0007669"/>
    <property type="project" value="RHEA"/>
</dbReference>
<dbReference type="GO" id="GO:0000196">
    <property type="term" value="P:cell integrity MAPK cascade"/>
    <property type="evidence" value="ECO:0007669"/>
    <property type="project" value="EnsemblFungi"/>
</dbReference>
<dbReference type="GO" id="GO:0070370">
    <property type="term" value="P:cellular heat acclimation"/>
    <property type="evidence" value="ECO:0000315"/>
    <property type="project" value="AspGD"/>
</dbReference>
<dbReference type="GO" id="GO:0071469">
    <property type="term" value="P:cellular response to alkaline pH"/>
    <property type="evidence" value="ECO:0000315"/>
    <property type="project" value="AspGD"/>
</dbReference>
<dbReference type="GO" id="GO:0034605">
    <property type="term" value="P:cellular response to heat"/>
    <property type="evidence" value="ECO:0000315"/>
    <property type="project" value="AspGD"/>
</dbReference>
<dbReference type="GO" id="GO:0071852">
    <property type="term" value="P:fungal-type cell wall organization or biogenesis"/>
    <property type="evidence" value="ECO:0000315"/>
    <property type="project" value="AspGD"/>
</dbReference>
<dbReference type="GO" id="GO:0030448">
    <property type="term" value="P:hyphal growth"/>
    <property type="evidence" value="ECO:0000315"/>
    <property type="project" value="AspGD"/>
</dbReference>
<dbReference type="GO" id="GO:0035556">
    <property type="term" value="P:intracellular signal transduction"/>
    <property type="evidence" value="ECO:0000318"/>
    <property type="project" value="GO_Central"/>
</dbReference>
<dbReference type="GO" id="GO:1902660">
    <property type="term" value="P:negative regulation of glucose mediated signaling pathway"/>
    <property type="evidence" value="ECO:0007669"/>
    <property type="project" value="EnsemblFungi"/>
</dbReference>
<dbReference type="GO" id="GO:1902413">
    <property type="term" value="P:negative regulation of mitotic cytokinesis"/>
    <property type="evidence" value="ECO:0007669"/>
    <property type="project" value="EnsemblFungi"/>
</dbReference>
<dbReference type="GO" id="GO:1905665">
    <property type="term" value="P:positive regulation of calcium ion import across plasma membrane"/>
    <property type="evidence" value="ECO:0007669"/>
    <property type="project" value="EnsemblFungi"/>
</dbReference>
<dbReference type="GO" id="GO:0050850">
    <property type="term" value="P:positive regulation of calcium-mediated signaling"/>
    <property type="evidence" value="ECO:0007669"/>
    <property type="project" value="EnsemblFungi"/>
</dbReference>
<dbReference type="GO" id="GO:0032995">
    <property type="term" value="P:regulation of fungal-type cell wall biogenesis"/>
    <property type="evidence" value="ECO:0007669"/>
    <property type="project" value="EnsemblFungi"/>
</dbReference>
<dbReference type="GO" id="GO:0048021">
    <property type="term" value="P:regulation of melanin biosynthetic process"/>
    <property type="evidence" value="ECO:0000315"/>
    <property type="project" value="AspGD"/>
</dbReference>
<dbReference type="CDD" id="cd07857">
    <property type="entry name" value="STKc_MPK1"/>
    <property type="match status" value="1"/>
</dbReference>
<dbReference type="FunFam" id="1.10.510.10:FF:000013">
    <property type="entry name" value="Mitogen-activated protein kinase"/>
    <property type="match status" value="1"/>
</dbReference>
<dbReference type="FunFam" id="3.30.200.20:FF:000157">
    <property type="entry name" value="Mitogen-activated protein kinase"/>
    <property type="match status" value="1"/>
</dbReference>
<dbReference type="Gene3D" id="3.30.200.20">
    <property type="entry name" value="Phosphorylase Kinase, domain 1"/>
    <property type="match status" value="1"/>
</dbReference>
<dbReference type="Gene3D" id="1.10.510.10">
    <property type="entry name" value="Transferase(Phosphotransferase) domain 1"/>
    <property type="match status" value="1"/>
</dbReference>
<dbReference type="InterPro" id="IPR011009">
    <property type="entry name" value="Kinase-like_dom_sf"/>
</dbReference>
<dbReference type="InterPro" id="IPR050117">
    <property type="entry name" value="MAP_kinase"/>
</dbReference>
<dbReference type="InterPro" id="IPR003527">
    <property type="entry name" value="MAP_kinase_CS"/>
</dbReference>
<dbReference type="InterPro" id="IPR000719">
    <property type="entry name" value="Prot_kinase_dom"/>
</dbReference>
<dbReference type="InterPro" id="IPR017441">
    <property type="entry name" value="Protein_kinase_ATP_BS"/>
</dbReference>
<dbReference type="InterPro" id="IPR008271">
    <property type="entry name" value="Ser/Thr_kinase_AS"/>
</dbReference>
<dbReference type="PANTHER" id="PTHR24055">
    <property type="entry name" value="MITOGEN-ACTIVATED PROTEIN KINASE"/>
    <property type="match status" value="1"/>
</dbReference>
<dbReference type="Pfam" id="PF00069">
    <property type="entry name" value="Pkinase"/>
    <property type="match status" value="1"/>
</dbReference>
<dbReference type="SMART" id="SM00220">
    <property type="entry name" value="S_TKc"/>
    <property type="match status" value="1"/>
</dbReference>
<dbReference type="SUPFAM" id="SSF56112">
    <property type="entry name" value="Protein kinase-like (PK-like)"/>
    <property type="match status" value="1"/>
</dbReference>
<dbReference type="PROSITE" id="PS01351">
    <property type="entry name" value="MAPK"/>
    <property type="match status" value="1"/>
</dbReference>
<dbReference type="PROSITE" id="PS00107">
    <property type="entry name" value="PROTEIN_KINASE_ATP"/>
    <property type="match status" value="1"/>
</dbReference>
<dbReference type="PROSITE" id="PS50011">
    <property type="entry name" value="PROTEIN_KINASE_DOM"/>
    <property type="match status" value="1"/>
</dbReference>
<dbReference type="PROSITE" id="PS00108">
    <property type="entry name" value="PROTEIN_KINASE_ST"/>
    <property type="match status" value="1"/>
</dbReference>
<proteinExistence type="evidence at protein level"/>
<comment type="function">
    <text evidence="4 5 8 9 10">Mitogen-activated protein kinase; part of cell wall integrity (CWI) signaling pathway composed of pkcA, the bck1-mkk2-mpka MAPK cascade and the downstream rlmA transcription regulator (PubMed:19715768). The CWI signaling pathway regulates cell wall integrity and pyomelanin formation (PubMed:19715768). CWI also controls oxidative stress response, gliotoxin production, iron adaptation and asexual development (PubMed:21883519, PubMed:32005734). Finally, CWI is constitutively required for A.fumigatus to cope with the temperature increase found in the mammalian lung environment, during infection (PubMed:33010083). MpkA positively modulates the expression of fumiquinazoline cluster during conidiogenesis and directly phosphorylates fmqC, and perhaps also fmqA (PubMed:33705521).</text>
</comment>
<comment type="catalytic activity">
    <reaction evidence="10">
        <text>L-seryl-[protein] + ATP = O-phospho-L-seryl-[protein] + ADP + H(+)</text>
        <dbReference type="Rhea" id="RHEA:17989"/>
        <dbReference type="Rhea" id="RHEA-COMP:9863"/>
        <dbReference type="Rhea" id="RHEA-COMP:11604"/>
        <dbReference type="ChEBI" id="CHEBI:15378"/>
        <dbReference type="ChEBI" id="CHEBI:29999"/>
        <dbReference type="ChEBI" id="CHEBI:30616"/>
        <dbReference type="ChEBI" id="CHEBI:83421"/>
        <dbReference type="ChEBI" id="CHEBI:456216"/>
        <dbReference type="EC" id="2.7.11.24"/>
    </reaction>
    <physiologicalReaction direction="left-to-right" evidence="10">
        <dbReference type="Rhea" id="RHEA:17990"/>
    </physiologicalReaction>
</comment>
<comment type="catalytic activity">
    <reaction evidence="10">
        <text>L-threonyl-[protein] + ATP = O-phospho-L-threonyl-[protein] + ADP + H(+)</text>
        <dbReference type="Rhea" id="RHEA:46608"/>
        <dbReference type="Rhea" id="RHEA-COMP:11060"/>
        <dbReference type="Rhea" id="RHEA-COMP:11605"/>
        <dbReference type="ChEBI" id="CHEBI:15378"/>
        <dbReference type="ChEBI" id="CHEBI:30013"/>
        <dbReference type="ChEBI" id="CHEBI:30616"/>
        <dbReference type="ChEBI" id="CHEBI:61977"/>
        <dbReference type="ChEBI" id="CHEBI:456216"/>
        <dbReference type="EC" id="2.7.11.24"/>
    </reaction>
    <physiologicalReaction direction="left-to-right" evidence="10">
        <dbReference type="Rhea" id="RHEA:46609"/>
    </physiologicalReaction>
</comment>
<comment type="cofactor">
    <cofactor evidence="2">
        <name>Mg(2+)</name>
        <dbReference type="ChEBI" id="CHEBI:18420"/>
    </cofactor>
</comment>
<comment type="activity regulation">
    <text evidence="4">Activated by threonine and tyrosine phosphorylation by the upstreamm MAPKK mkk2.</text>
</comment>
<comment type="subunit">
    <text evidence="8 9 10">Interacts with flbB, flbC, brlA, and rasB (PubMed:32005734). Interacts with fmqA and fmqC (PubMed:33705521). Interacts with hsp90 (PubMed:33010083).</text>
</comment>
<comment type="induction">
    <text evidence="4">Expression is induced by cell wall-disturbing compounds.</text>
</comment>
<comment type="PTM">
    <text evidence="4 6 7 8">Phosphorylated by the upstreamm MAPKK mkk2 (PubMed:19715768). Phosphorylation is induced during asexual development (PubMed:25911225, PubMed:32005734). Phosphorylation is regulated by rlmA (PubMed:27473315).</text>
</comment>
<comment type="disruption phenotype">
    <text evidence="4 8 10">Results in severe sensitivity against cell wall-disturbing compounds congo red or calcofluor white, and drastic alterations of the fungal morphology (PubMed:19715768). Leads to reduced conidiation during asexual differentiation (PubMed:32005734). Abolishes the production of fumiquinazoline C (PubMed:33705521).</text>
</comment>
<comment type="similarity">
    <text evidence="1">Belongs to the protein kinase superfamily. Ser/Thr protein kinase family.</text>
</comment>
<name>MPKA_ASPFU</name>
<keyword id="KW-0067">ATP-binding</keyword>
<keyword id="KW-0418">Kinase</keyword>
<keyword id="KW-0460">Magnesium</keyword>
<keyword id="KW-0547">Nucleotide-binding</keyword>
<keyword id="KW-0597">Phosphoprotein</keyword>
<keyword id="KW-1185">Reference proteome</keyword>
<keyword id="KW-0723">Serine/threonine-protein kinase</keyword>
<keyword id="KW-0808">Transferase</keyword>
<feature type="chain" id="PRO_0000453186" description="Mitogen-activated protein kinase mpkA">
    <location>
        <begin position="1"/>
        <end position="424"/>
    </location>
</feature>
<feature type="domain" description="Protein kinase" evidence="1">
    <location>
        <begin position="23"/>
        <end position="314"/>
    </location>
</feature>
<feature type="region of interest" description="Disordered" evidence="3">
    <location>
        <begin position="375"/>
        <end position="424"/>
    </location>
</feature>
<feature type="binding site" evidence="1">
    <location>
        <begin position="29"/>
        <end position="37"/>
    </location>
    <ligand>
        <name>ATP</name>
        <dbReference type="ChEBI" id="CHEBI:30616"/>
    </ligand>
</feature>
<feature type="binding site" evidence="1">
    <location>
        <position position="52"/>
    </location>
    <ligand>
        <name>ATP</name>
        <dbReference type="ChEBI" id="CHEBI:30616"/>
    </ligand>
</feature>
<accession>Q4WQR3</accession>
<sequence>MSDLQGRKVFKVFNQDFIVDERYNVTKELGQGAYGIVCAATNVHTGEGVAIKKVTNVFSKKILAKRALREIKLLQHFRGHRNITCLYDMDIPRPDNFNETYLYEELMECDLAAIIRSGQPLTDAHFQSFIYQILCGLKYIHSANVLHRDLKPGNLLVNADCELKICDFGLARGFSIDPEENAGYMTEYVATRWYRAPEIMLSFQSYTKAIDVWSVGCILAELLGGRPFFKGRDYVDQLNQILHYLGTPNEETLSRIGSPRAQEYVRNLPFMPKIPFQRLFPNANPDALDLLDRMLAFDPASRISVEEALEHPYLHIWHDASDEPTCPTTFDFHFEVVDDVQEMRKMIYDEVVRFRNLVRQQSQAQAAAAAQQQQQQIAQQTNVPIPDHQQGGWKQEEPKPQEVHAAGGHVNDLESSLQRGMDVQ</sequence>
<reference key="1">
    <citation type="journal article" date="2005" name="Nature">
        <title>Genomic sequence of the pathogenic and allergenic filamentous fungus Aspergillus fumigatus.</title>
        <authorList>
            <person name="Nierman W.C."/>
            <person name="Pain A."/>
            <person name="Anderson M.J."/>
            <person name="Wortman J.R."/>
            <person name="Kim H.S."/>
            <person name="Arroyo J."/>
            <person name="Berriman M."/>
            <person name="Abe K."/>
            <person name="Archer D.B."/>
            <person name="Bermejo C."/>
            <person name="Bennett J.W."/>
            <person name="Bowyer P."/>
            <person name="Chen D."/>
            <person name="Collins M."/>
            <person name="Coulsen R."/>
            <person name="Davies R."/>
            <person name="Dyer P.S."/>
            <person name="Farman M.L."/>
            <person name="Fedorova N."/>
            <person name="Fedorova N.D."/>
            <person name="Feldblyum T.V."/>
            <person name="Fischer R."/>
            <person name="Fosker N."/>
            <person name="Fraser A."/>
            <person name="Garcia J.L."/>
            <person name="Garcia M.J."/>
            <person name="Goble A."/>
            <person name="Goldman G.H."/>
            <person name="Gomi K."/>
            <person name="Griffith-Jones S."/>
            <person name="Gwilliam R."/>
            <person name="Haas B.J."/>
            <person name="Haas H."/>
            <person name="Harris D.E."/>
            <person name="Horiuchi H."/>
            <person name="Huang J."/>
            <person name="Humphray S."/>
            <person name="Jimenez J."/>
            <person name="Keller N."/>
            <person name="Khouri H."/>
            <person name="Kitamoto K."/>
            <person name="Kobayashi T."/>
            <person name="Konzack S."/>
            <person name="Kulkarni R."/>
            <person name="Kumagai T."/>
            <person name="Lafton A."/>
            <person name="Latge J.-P."/>
            <person name="Li W."/>
            <person name="Lord A."/>
            <person name="Lu C."/>
            <person name="Majoros W.H."/>
            <person name="May G.S."/>
            <person name="Miller B.L."/>
            <person name="Mohamoud Y."/>
            <person name="Molina M."/>
            <person name="Monod M."/>
            <person name="Mouyna I."/>
            <person name="Mulligan S."/>
            <person name="Murphy L.D."/>
            <person name="O'Neil S."/>
            <person name="Paulsen I."/>
            <person name="Penalva M.A."/>
            <person name="Pertea M."/>
            <person name="Price C."/>
            <person name="Pritchard B.L."/>
            <person name="Quail M.A."/>
            <person name="Rabbinowitsch E."/>
            <person name="Rawlins N."/>
            <person name="Rajandream M.A."/>
            <person name="Reichard U."/>
            <person name="Renauld H."/>
            <person name="Robson G.D."/>
            <person name="Rodriguez de Cordoba S."/>
            <person name="Rodriguez-Pena J.M."/>
            <person name="Ronning C.M."/>
            <person name="Rutter S."/>
            <person name="Salzberg S.L."/>
            <person name="Sanchez M."/>
            <person name="Sanchez-Ferrero J.C."/>
            <person name="Saunders D."/>
            <person name="Seeger K."/>
            <person name="Squares R."/>
            <person name="Squares S."/>
            <person name="Takeuchi M."/>
            <person name="Tekaia F."/>
            <person name="Turner G."/>
            <person name="Vazquez de Aldana C.R."/>
            <person name="Weidman J."/>
            <person name="White O."/>
            <person name="Woodward J.R."/>
            <person name="Yu J.-H."/>
            <person name="Fraser C.M."/>
            <person name="Galagan J.E."/>
            <person name="Asai K."/>
            <person name="Machida M."/>
            <person name="Hall N."/>
            <person name="Barrell B.G."/>
            <person name="Denning D.W."/>
        </authorList>
    </citation>
    <scope>NUCLEOTIDE SEQUENCE [LARGE SCALE GENOMIC DNA]</scope>
    <source>
        <strain>ATCC MYA-4609 / CBS 101355 / FGSC A1100 / Af293</strain>
    </source>
</reference>
<reference key="2">
    <citation type="journal article" date="2009" name="Fungal Genet. Biol.">
        <title>The MpkA MAP kinase module regulates cell wall integrity signaling and pyomelanin formation in Aspergillus fumigatus.</title>
        <authorList>
            <person name="Valiante V."/>
            <person name="Jain R."/>
            <person name="Heinekamp T."/>
            <person name="Brakhage A.A."/>
        </authorList>
    </citation>
    <scope>FUNCTION</scope>
    <scope>DISRUPTION PHENOTYPE</scope>
    <scope>INDUCTION</scope>
    <scope>PHOSPHORYLATION</scope>
    <scope>ACTIVITY REGULATION</scope>
</reference>
<reference key="3">
    <citation type="journal article" date="2011" name="Mol. Microbiol.">
        <title>The MAP kinase MpkA controls cell wall integrity, oxidative stress response, gliotoxin production and iron adaptation in Aspergillus fumigatus.</title>
        <authorList>
            <person name="Jain R."/>
            <person name="Valiante V."/>
            <person name="Remme N."/>
            <person name="Docimo T."/>
            <person name="Heinekamp T."/>
            <person name="Hertweck C."/>
            <person name="Gershenzon J."/>
            <person name="Haas H."/>
            <person name="Brakhage A.A."/>
        </authorList>
    </citation>
    <scope>FUNCTION</scope>
</reference>
<reference key="4">
    <citation type="journal article" date="2015" name="Eukaryot. Cell">
        <title>The Aspergillus fumigatus sitA phosphatase homologue is important for adhesion, cell wall integrity, biofilm formation, and virulence.</title>
        <authorList>
            <person name="Bom V.L."/>
            <person name="de Castro P.A."/>
            <person name="Winkelstroeter L.K."/>
            <person name="Marine M."/>
            <person name="Hori J.I."/>
            <person name="Ramalho L.N."/>
            <person name="dos Reis T.F."/>
            <person name="Goldman M.H."/>
            <person name="Brown N.A."/>
            <person name="Rajendran R."/>
            <person name="Ramage G."/>
            <person name="Walker L.A."/>
            <person name="Munro C.A."/>
            <person name="Rocha M.C."/>
            <person name="Malavazi I."/>
            <person name="Hagiwara D."/>
            <person name="Goldman G.H."/>
        </authorList>
    </citation>
    <scope>FUNCTION</scope>
    <scope>PHOSPHORYLATION</scope>
</reference>
<reference key="5">
    <citation type="journal article" date="2016" name="G3 (Bethesda)">
        <title>Aspergillus fumigatus MADS-Box transcription factor rlmA is required for regulation of the cell wall integrity and virulence.</title>
        <authorList>
            <person name="Rocha M.C."/>
            <person name="Fabri J.H."/>
            <person name="Franco de Godoy K."/>
            <person name="Alves de Castro P."/>
            <person name="Hori J.I."/>
            <person name="Ferreira da Cunha A."/>
            <person name="Arentshorst M."/>
            <person name="Ram A.F."/>
            <person name="van den Hondel C.A."/>
            <person name="Goldman G.H."/>
            <person name="Malavazi I."/>
        </authorList>
    </citation>
    <scope>FUNCTION</scope>
    <scope>PHOSPHORYLATION</scope>
</reference>
<reference key="6">
    <citation type="journal article" date="2020" name="Appl. Environ. Microbiol.">
        <title>The cell wall integrity pathway contributes to the early stages of Aspergillus fumigatus asexual development.</title>
        <authorList>
            <person name="Rocha M.C."/>
            <person name="Fabri J.H.T.M."/>
            <person name="Simoes I.T."/>
            <person name="Silva-Rocha R."/>
            <person name="Hagiwara D."/>
            <person name="da Cunha A.F."/>
            <person name="Goldman G.H."/>
            <person name="Canovas D."/>
            <person name="Malavazi I."/>
        </authorList>
    </citation>
    <scope>FUNCTION</scope>
    <scope>DISRUPTION PHENOTYPE</scope>
    <scope>PHOSPHORYLATION</scope>
    <scope>INTERACTION WITH FLBB; FLBC; BRLA AND RASB</scope>
</reference>
<reference key="7">
    <citation type="journal article" date="2021" name="Cell. Microbiol.">
        <title>Aspergillus fumigatus Hsp90 interacts with the main components of the cell wall integrity pathway and cooperates in heat shock and cell wall stress adaptation.</title>
        <authorList>
            <person name="Rocha M.C."/>
            <person name="Minari K."/>
            <person name="Fabri J.H.T.M."/>
            <person name="Kerkaert J.D."/>
            <person name="Gava L.M."/>
            <person name="da Cunha A.F."/>
            <person name="Cramer R.A."/>
            <person name="Borges J.C."/>
            <person name="Malavazi I."/>
        </authorList>
    </citation>
    <scope>FUNCTION</scope>
    <scope>INTERACTION WITH HSP90</scope>
</reference>
<reference key="8">
    <citation type="journal article" date="2021" name="Genetics">
        <title>Transcriptional control of the production of Aspergillus fumigatus conidia-borne secondary metabolite fumiquinazoline C important for phagocytosis protection.</title>
        <authorList>
            <person name="Rocha M.C."/>
            <person name="Fabri J.H.T.M."/>
            <person name="da Silva L.P."/>
            <person name="Angolini C.F.F."/>
            <person name="Bertolini M.C."/>
            <person name="da Cunha A.F."/>
            <person name="Valiante V."/>
            <person name="Goldman G.H."/>
            <person name="Fill T.P."/>
            <person name="Malavazi I."/>
        </authorList>
    </citation>
    <scope>FUNCTION</scope>
    <scope>DISRUPTION PHENOTYPE</scope>
    <scope>INTERACTION WITH FMQA AND FMQC</scope>
</reference>
<gene>
    <name evidence="11" type="primary">mpkA</name>
    <name type="ORF">AFUA_4G13720</name>
</gene>
<protein>
    <recommendedName>
        <fullName evidence="11">Mitogen-activated protein kinase mpkA</fullName>
        <shortName evidence="11">MAP kinase mpkA</shortName>
        <ecNumber evidence="10">2.7.11.24</ecNumber>
    </recommendedName>
</protein>